<reference key="1">
    <citation type="journal article" date="2004" name="Proc. Natl. Acad. Sci. U.S.A.">
        <title>The louse-borne human pathogen Bartonella quintana is a genomic derivative of the zoonotic agent Bartonella henselae.</title>
        <authorList>
            <person name="Alsmark U.C.M."/>
            <person name="Frank A.C."/>
            <person name="Karlberg E.O."/>
            <person name="Legault B.-A."/>
            <person name="Ardell D.H."/>
            <person name="Canbaeck B."/>
            <person name="Eriksson A.-S."/>
            <person name="Naeslund A.K."/>
            <person name="Handley S.A."/>
            <person name="Huvet M."/>
            <person name="La Scola B."/>
            <person name="Holmberg M."/>
            <person name="Andersson S.G.E."/>
        </authorList>
    </citation>
    <scope>NUCLEOTIDE SEQUENCE [LARGE SCALE GENOMIC DNA]</scope>
    <source>
        <strain>Toulouse</strain>
    </source>
</reference>
<keyword id="KW-0687">Ribonucleoprotein</keyword>
<keyword id="KW-0689">Ribosomal protein</keyword>
<proteinExistence type="inferred from homology"/>
<name>RS21_BARQU</name>
<accession>Q6G0U2</accession>
<organism>
    <name type="scientific">Bartonella quintana (strain Toulouse)</name>
    <name type="common">Rochalimaea quintana</name>
    <dbReference type="NCBI Taxonomy" id="283165"/>
    <lineage>
        <taxon>Bacteria</taxon>
        <taxon>Pseudomonadati</taxon>
        <taxon>Pseudomonadota</taxon>
        <taxon>Alphaproteobacteria</taxon>
        <taxon>Hyphomicrobiales</taxon>
        <taxon>Bartonellaceae</taxon>
        <taxon>Bartonella</taxon>
    </lineage>
</organism>
<gene>
    <name evidence="1" type="primary">rpsU</name>
    <name type="ordered locus">BQ01250</name>
</gene>
<protein>
    <recommendedName>
        <fullName evidence="1">Small ribosomal subunit protein bS21</fullName>
    </recommendedName>
    <alternativeName>
        <fullName evidence="3">30S ribosomal protein S21</fullName>
    </alternativeName>
</protein>
<sequence>MQVLVRDNNVDQALRALKKKMQREGIFREMKMRGYYEKPSEKRAREKAEAIRRTRKLARKRAQREGLMSNGRISALR</sequence>
<feature type="chain" id="PRO_0000178303" description="Small ribosomal subunit protein bS21">
    <location>
        <begin position="1"/>
        <end position="77"/>
    </location>
</feature>
<feature type="region of interest" description="Disordered" evidence="2">
    <location>
        <begin position="55"/>
        <end position="77"/>
    </location>
</feature>
<dbReference type="EMBL" id="BX897700">
    <property type="protein sequence ID" value="CAF25631.1"/>
    <property type="molecule type" value="Genomic_DNA"/>
</dbReference>
<dbReference type="RefSeq" id="WP_011178953.1">
    <property type="nucleotide sequence ID" value="NC_005955.1"/>
</dbReference>
<dbReference type="SMR" id="Q6G0U2"/>
<dbReference type="GeneID" id="56532512"/>
<dbReference type="KEGG" id="bqu:BQ01250"/>
<dbReference type="eggNOG" id="COG0828">
    <property type="taxonomic scope" value="Bacteria"/>
</dbReference>
<dbReference type="HOGENOM" id="CLU_159258_0_1_5"/>
<dbReference type="OrthoDB" id="9811907at2"/>
<dbReference type="Proteomes" id="UP000000597">
    <property type="component" value="Chromosome"/>
</dbReference>
<dbReference type="GO" id="GO:1990904">
    <property type="term" value="C:ribonucleoprotein complex"/>
    <property type="evidence" value="ECO:0007669"/>
    <property type="project" value="UniProtKB-KW"/>
</dbReference>
<dbReference type="GO" id="GO:0005840">
    <property type="term" value="C:ribosome"/>
    <property type="evidence" value="ECO:0007669"/>
    <property type="project" value="UniProtKB-KW"/>
</dbReference>
<dbReference type="GO" id="GO:0003735">
    <property type="term" value="F:structural constituent of ribosome"/>
    <property type="evidence" value="ECO:0007669"/>
    <property type="project" value="InterPro"/>
</dbReference>
<dbReference type="GO" id="GO:0006412">
    <property type="term" value="P:translation"/>
    <property type="evidence" value="ECO:0007669"/>
    <property type="project" value="UniProtKB-UniRule"/>
</dbReference>
<dbReference type="Gene3D" id="1.20.5.1150">
    <property type="entry name" value="Ribosomal protein S8"/>
    <property type="match status" value="1"/>
</dbReference>
<dbReference type="HAMAP" id="MF_00358">
    <property type="entry name" value="Ribosomal_bS21"/>
    <property type="match status" value="1"/>
</dbReference>
<dbReference type="InterPro" id="IPR001911">
    <property type="entry name" value="Ribosomal_bS21"/>
</dbReference>
<dbReference type="InterPro" id="IPR018278">
    <property type="entry name" value="Ribosomal_bS21_CS"/>
</dbReference>
<dbReference type="InterPro" id="IPR038380">
    <property type="entry name" value="Ribosomal_bS21_sf"/>
</dbReference>
<dbReference type="NCBIfam" id="TIGR00030">
    <property type="entry name" value="S21p"/>
    <property type="match status" value="1"/>
</dbReference>
<dbReference type="PANTHER" id="PTHR21109">
    <property type="entry name" value="MITOCHONDRIAL 28S RIBOSOMAL PROTEIN S21"/>
    <property type="match status" value="1"/>
</dbReference>
<dbReference type="PANTHER" id="PTHR21109:SF0">
    <property type="entry name" value="SMALL RIBOSOMAL SUBUNIT PROTEIN BS21M"/>
    <property type="match status" value="1"/>
</dbReference>
<dbReference type="Pfam" id="PF01165">
    <property type="entry name" value="Ribosomal_S21"/>
    <property type="match status" value="1"/>
</dbReference>
<dbReference type="PRINTS" id="PR00976">
    <property type="entry name" value="RIBOSOMALS21"/>
</dbReference>
<dbReference type="PROSITE" id="PS01181">
    <property type="entry name" value="RIBOSOMAL_S21"/>
    <property type="match status" value="1"/>
</dbReference>
<evidence type="ECO:0000255" key="1">
    <source>
        <dbReference type="HAMAP-Rule" id="MF_00358"/>
    </source>
</evidence>
<evidence type="ECO:0000256" key="2">
    <source>
        <dbReference type="SAM" id="MobiDB-lite"/>
    </source>
</evidence>
<evidence type="ECO:0000305" key="3"/>
<comment type="similarity">
    <text evidence="1">Belongs to the bacterial ribosomal protein bS21 family.</text>
</comment>